<name>MUTS2_HALSA</name>
<accession>Q9HSL6</accession>
<organism>
    <name type="scientific">Halobacterium salinarum (strain ATCC 700922 / JCM 11081 / NRC-1)</name>
    <name type="common">Halobacterium halobium</name>
    <dbReference type="NCBI Taxonomy" id="64091"/>
    <lineage>
        <taxon>Archaea</taxon>
        <taxon>Methanobacteriati</taxon>
        <taxon>Methanobacteriota</taxon>
        <taxon>Stenosarchaea group</taxon>
        <taxon>Halobacteria</taxon>
        <taxon>Halobacteriales</taxon>
        <taxon>Halobacteriaceae</taxon>
        <taxon>Halobacterium</taxon>
        <taxon>Halobacterium salinarum NRC-34001</taxon>
    </lineage>
</organism>
<comment type="function">
    <text evidence="1">This protein is involved in the repair of mismatches in DNA. It is possible that it carries out the mismatch recognition step. This protein has a weak ATPase activity (By similarity).</text>
</comment>
<comment type="similarity">
    <text evidence="3">Belongs to the DNA mismatch repair MutS family.</text>
</comment>
<reference key="1">
    <citation type="journal article" date="2000" name="Proc. Natl. Acad. Sci. U.S.A.">
        <title>Genome sequence of Halobacterium species NRC-1.</title>
        <authorList>
            <person name="Ng W.V."/>
            <person name="Kennedy S.P."/>
            <person name="Mahairas G.G."/>
            <person name="Berquist B."/>
            <person name="Pan M."/>
            <person name="Shukla H.D."/>
            <person name="Lasky S.R."/>
            <person name="Baliga N.S."/>
            <person name="Thorsson V."/>
            <person name="Sbrogna J."/>
            <person name="Swartzell S."/>
            <person name="Weir D."/>
            <person name="Hall J."/>
            <person name="Dahl T.A."/>
            <person name="Welti R."/>
            <person name="Goo Y.A."/>
            <person name="Leithauser B."/>
            <person name="Keller K."/>
            <person name="Cruz R."/>
            <person name="Danson M.J."/>
            <person name="Hough D.W."/>
            <person name="Maddocks D.G."/>
            <person name="Jablonski P.E."/>
            <person name="Krebs M.P."/>
            <person name="Angevine C.M."/>
            <person name="Dale H."/>
            <person name="Isenbarger T.A."/>
            <person name="Peck R.F."/>
            <person name="Pohlschroder M."/>
            <person name="Spudich J.L."/>
            <person name="Jung K.-H."/>
            <person name="Alam M."/>
            <person name="Freitas T."/>
            <person name="Hou S."/>
            <person name="Daniels C.J."/>
            <person name="Dennis P.P."/>
            <person name="Omer A.D."/>
            <person name="Ebhardt H."/>
            <person name="Lowe T.M."/>
            <person name="Liang P."/>
            <person name="Riley M."/>
            <person name="Hood L."/>
            <person name="DasSarma S."/>
        </authorList>
    </citation>
    <scope>NUCLEOTIDE SEQUENCE [LARGE SCALE GENOMIC DNA]</scope>
    <source>
        <strain>ATCC 700922 / JCM 11081 / NRC-1</strain>
    </source>
</reference>
<dbReference type="EMBL" id="AE004437">
    <property type="protein sequence ID" value="AAG18788.1"/>
    <property type="molecule type" value="Genomic_DNA"/>
</dbReference>
<dbReference type="PIR" id="H84177">
    <property type="entry name" value="H84177"/>
</dbReference>
<dbReference type="SMR" id="Q9HSL6"/>
<dbReference type="STRING" id="64091.VNG_0172G"/>
<dbReference type="PaxDb" id="64091-VNG_0172G"/>
<dbReference type="KEGG" id="hal:VNG_0172G"/>
<dbReference type="PATRIC" id="fig|64091.14.peg.124"/>
<dbReference type="HOGENOM" id="CLU_002472_3_1_2"/>
<dbReference type="InParanoid" id="Q9HSL6"/>
<dbReference type="OrthoDB" id="146065at2157"/>
<dbReference type="PhylomeDB" id="Q9HSL6"/>
<dbReference type="Proteomes" id="UP000000554">
    <property type="component" value="Chromosome"/>
</dbReference>
<dbReference type="GO" id="GO:0005524">
    <property type="term" value="F:ATP binding"/>
    <property type="evidence" value="ECO:0007669"/>
    <property type="project" value="UniProtKB-UniRule"/>
</dbReference>
<dbReference type="GO" id="GO:0140664">
    <property type="term" value="F:ATP-dependent DNA damage sensor activity"/>
    <property type="evidence" value="ECO:0007669"/>
    <property type="project" value="InterPro"/>
</dbReference>
<dbReference type="GO" id="GO:0003684">
    <property type="term" value="F:damaged DNA binding"/>
    <property type="evidence" value="ECO:0007669"/>
    <property type="project" value="UniProtKB-UniRule"/>
</dbReference>
<dbReference type="GO" id="GO:0003690">
    <property type="term" value="F:double-stranded DNA binding"/>
    <property type="evidence" value="ECO:0000318"/>
    <property type="project" value="GO_Central"/>
</dbReference>
<dbReference type="GO" id="GO:0030983">
    <property type="term" value="F:mismatched DNA binding"/>
    <property type="evidence" value="ECO:0007669"/>
    <property type="project" value="InterPro"/>
</dbReference>
<dbReference type="GO" id="GO:0006298">
    <property type="term" value="P:mismatch repair"/>
    <property type="evidence" value="ECO:0007669"/>
    <property type="project" value="UniProtKB-UniRule"/>
</dbReference>
<dbReference type="CDD" id="cd03284">
    <property type="entry name" value="ABC_MutS1"/>
    <property type="match status" value="1"/>
</dbReference>
<dbReference type="FunFam" id="1.10.1420.10:FF:000007">
    <property type="entry name" value="DNA mismatch repair protein MutS"/>
    <property type="match status" value="1"/>
</dbReference>
<dbReference type="FunFam" id="3.40.50.300:FF:000870">
    <property type="entry name" value="MutS protein homolog 4"/>
    <property type="match status" value="1"/>
</dbReference>
<dbReference type="Gene3D" id="1.10.1420.10">
    <property type="match status" value="2"/>
</dbReference>
<dbReference type="Gene3D" id="3.40.1170.10">
    <property type="entry name" value="DNA repair protein MutS, domain I"/>
    <property type="match status" value="1"/>
</dbReference>
<dbReference type="Gene3D" id="3.30.420.110">
    <property type="entry name" value="MutS, connector domain"/>
    <property type="match status" value="1"/>
</dbReference>
<dbReference type="Gene3D" id="3.40.50.300">
    <property type="entry name" value="P-loop containing nucleotide triphosphate hydrolases"/>
    <property type="match status" value="1"/>
</dbReference>
<dbReference type="HAMAP" id="MF_00096">
    <property type="entry name" value="MutS"/>
    <property type="match status" value="1"/>
</dbReference>
<dbReference type="InterPro" id="IPR005748">
    <property type="entry name" value="DNA_mismatch_repair_MutS"/>
</dbReference>
<dbReference type="InterPro" id="IPR007695">
    <property type="entry name" value="DNA_mismatch_repair_MutS-lik_N"/>
</dbReference>
<dbReference type="InterPro" id="IPR017261">
    <property type="entry name" value="DNA_mismatch_repair_MutS/MSH"/>
</dbReference>
<dbReference type="InterPro" id="IPR000432">
    <property type="entry name" value="DNA_mismatch_repair_MutS_C"/>
</dbReference>
<dbReference type="InterPro" id="IPR007861">
    <property type="entry name" value="DNA_mismatch_repair_MutS_clamp"/>
</dbReference>
<dbReference type="InterPro" id="IPR007696">
    <property type="entry name" value="DNA_mismatch_repair_MutS_core"/>
</dbReference>
<dbReference type="InterPro" id="IPR016151">
    <property type="entry name" value="DNA_mismatch_repair_MutS_N"/>
</dbReference>
<dbReference type="InterPro" id="IPR036187">
    <property type="entry name" value="DNA_mismatch_repair_MutS_sf"/>
</dbReference>
<dbReference type="InterPro" id="IPR007860">
    <property type="entry name" value="DNA_mmatch_repair_MutS_con_dom"/>
</dbReference>
<dbReference type="InterPro" id="IPR045076">
    <property type="entry name" value="MutS"/>
</dbReference>
<dbReference type="InterPro" id="IPR036678">
    <property type="entry name" value="MutS_con_dom_sf"/>
</dbReference>
<dbReference type="InterPro" id="IPR027417">
    <property type="entry name" value="P-loop_NTPase"/>
</dbReference>
<dbReference type="NCBIfam" id="TIGR01070">
    <property type="entry name" value="mutS1"/>
    <property type="match status" value="1"/>
</dbReference>
<dbReference type="NCBIfam" id="NF003810">
    <property type="entry name" value="PRK05399.1"/>
    <property type="match status" value="1"/>
</dbReference>
<dbReference type="PANTHER" id="PTHR11361:SF34">
    <property type="entry name" value="DNA MISMATCH REPAIR PROTEIN MSH1, MITOCHONDRIAL"/>
    <property type="match status" value="1"/>
</dbReference>
<dbReference type="PANTHER" id="PTHR11361">
    <property type="entry name" value="DNA MISMATCH REPAIR PROTEIN MUTS FAMILY MEMBER"/>
    <property type="match status" value="1"/>
</dbReference>
<dbReference type="Pfam" id="PF01624">
    <property type="entry name" value="MutS_I"/>
    <property type="match status" value="1"/>
</dbReference>
<dbReference type="Pfam" id="PF05188">
    <property type="entry name" value="MutS_II"/>
    <property type="match status" value="1"/>
</dbReference>
<dbReference type="Pfam" id="PF05192">
    <property type="entry name" value="MutS_III"/>
    <property type="match status" value="1"/>
</dbReference>
<dbReference type="Pfam" id="PF05190">
    <property type="entry name" value="MutS_IV"/>
    <property type="match status" value="1"/>
</dbReference>
<dbReference type="Pfam" id="PF00488">
    <property type="entry name" value="MutS_V"/>
    <property type="match status" value="1"/>
</dbReference>
<dbReference type="PIRSF" id="PIRSF037677">
    <property type="entry name" value="DNA_mis_repair_Msh6"/>
    <property type="match status" value="1"/>
</dbReference>
<dbReference type="SMART" id="SM00534">
    <property type="entry name" value="MUTSac"/>
    <property type="match status" value="1"/>
</dbReference>
<dbReference type="SMART" id="SM00533">
    <property type="entry name" value="MUTSd"/>
    <property type="match status" value="1"/>
</dbReference>
<dbReference type="SUPFAM" id="SSF55271">
    <property type="entry name" value="DNA repair protein MutS, domain I"/>
    <property type="match status" value="1"/>
</dbReference>
<dbReference type="SUPFAM" id="SSF53150">
    <property type="entry name" value="DNA repair protein MutS, domain II"/>
    <property type="match status" value="1"/>
</dbReference>
<dbReference type="SUPFAM" id="SSF48334">
    <property type="entry name" value="DNA repair protein MutS, domain III"/>
    <property type="match status" value="1"/>
</dbReference>
<dbReference type="SUPFAM" id="SSF52540">
    <property type="entry name" value="P-loop containing nucleoside triphosphate hydrolases"/>
    <property type="match status" value="1"/>
</dbReference>
<dbReference type="PROSITE" id="PS00486">
    <property type="entry name" value="DNA_MISMATCH_REPAIR_2"/>
    <property type="match status" value="1"/>
</dbReference>
<feature type="chain" id="PRO_0000115176" description="DNA mismatch repair protein MutS 2">
    <location>
        <begin position="1"/>
        <end position="863"/>
    </location>
</feature>
<feature type="binding site" evidence="2">
    <location>
        <begin position="626"/>
        <end position="633"/>
    </location>
    <ligand>
        <name>ATP</name>
        <dbReference type="ChEBI" id="CHEBI:30616"/>
    </ligand>
</feature>
<proteinExistence type="inferred from homology"/>
<sequence length="863" mass="92663">MDAALGPPDAMAASEGDLTPMMSQYFELTRRYDDALVLFQVGDFYELFCAAAETAARICEVTLTAREDSTGQYPMAGVPIDTAEPYIEALLDAGYRVAVADQVQDPDEVSGVVDRAVTRVVTPGTVTEDELLGGADNNFVAALAGGRDADAGFGLALLDVSTGDCYATRLGDEARVRDELGRFTPAELVVGPGVDADRFADEAFVAAYDDDAFEPAAARERVADYFGGEDVLPTTAELRACGALLSYAEYTRGGAGDSQRLTYLNHVTRYSPTEHLQMDAVALRSLELFEQRSVHGTDGTALVDVLDETACALGRRKLTDWLRRPLVDSDAIAARHDAVGELVADPLSREELHEHLRDVYDIERLVSRVSRGRANARDLRALADTLAVVPEVRGLLADADARKLQSLREALDDLPEIRGLLDRAIVADPPQELTDGGVIRDGYDERLDDLRATERAGKQWVDDLEASERERTGVDSLKVGQNSVHGYYIEVTKANMDAVPEDYQRRQTLKNAERYVTPELKEREEEIVRAEQRAQDLEYELFVGIRERVAEAAERMQAVARALAAVDALASFAAVAAAHDYTKPVMGGDGIHIEGGRHPVVERTESGFVPNDTTLNDDRRVAVITGPNMSGKSTYMRQVAVIVVLAQAGCFVPAAAAELRVVDRVFTRVGASDDIAGGRSTFMVEMTELASILRAATDESLVLLDEVGRGTATTDGLAIARAVTEHIHDAVGATTLFATHHHELTADADRLPDALNLHFAATRGDDGVAFEHAVRAGAATASYGVEVARTAGVPEPVVDRARELLDAPATADGGDGGTTPTADANGQRGAAAGIVAELRDVSVAELTPIEALNVLNDLASRVD</sequence>
<keyword id="KW-0067">ATP-binding</keyword>
<keyword id="KW-0227">DNA damage</keyword>
<keyword id="KW-0234">DNA repair</keyword>
<keyword id="KW-0238">DNA-binding</keyword>
<keyword id="KW-0547">Nucleotide-binding</keyword>
<keyword id="KW-1185">Reference proteome</keyword>
<protein>
    <recommendedName>
        <fullName>DNA mismatch repair protein MutS 2</fullName>
    </recommendedName>
</protein>
<evidence type="ECO:0000250" key="1"/>
<evidence type="ECO:0000255" key="2"/>
<evidence type="ECO:0000305" key="3"/>
<gene>
    <name type="primary">mutS2</name>
    <name type="ordered locus">VNG_0172G</name>
</gene>